<sequence length="117" mass="13271">MSNIIKAIEDAQLKQDLPKFSPGDTVIVQVKVKEGERERLQAFEGVVIAIRNRGLHSAFTVRKISNGEGVERTFQTHSPIVNSIEVKRRGAVRRAKLYYLRERSGKSARIKEKLAKK</sequence>
<accession>B6EGC2</accession>
<organism>
    <name type="scientific">Aliivibrio salmonicida (strain LFI1238)</name>
    <name type="common">Vibrio salmonicida (strain LFI1238)</name>
    <dbReference type="NCBI Taxonomy" id="316275"/>
    <lineage>
        <taxon>Bacteria</taxon>
        <taxon>Pseudomonadati</taxon>
        <taxon>Pseudomonadota</taxon>
        <taxon>Gammaproteobacteria</taxon>
        <taxon>Vibrionales</taxon>
        <taxon>Vibrionaceae</taxon>
        <taxon>Aliivibrio</taxon>
    </lineage>
</organism>
<evidence type="ECO:0000255" key="1">
    <source>
        <dbReference type="HAMAP-Rule" id="MF_00402"/>
    </source>
</evidence>
<evidence type="ECO:0000305" key="2"/>
<protein>
    <recommendedName>
        <fullName evidence="1">Large ribosomal subunit protein bL19</fullName>
    </recommendedName>
    <alternativeName>
        <fullName evidence="2">50S ribosomal protein L19</fullName>
    </alternativeName>
</protein>
<keyword id="KW-0687">Ribonucleoprotein</keyword>
<keyword id="KW-0689">Ribosomal protein</keyword>
<comment type="function">
    <text evidence="1">This protein is located at the 30S-50S ribosomal subunit interface and may play a role in the structure and function of the aminoacyl-tRNA binding site.</text>
</comment>
<comment type="similarity">
    <text evidence="1">Belongs to the bacterial ribosomal protein bL19 family.</text>
</comment>
<feature type="chain" id="PRO_1000193783" description="Large ribosomal subunit protein bL19">
    <location>
        <begin position="1"/>
        <end position="117"/>
    </location>
</feature>
<reference key="1">
    <citation type="journal article" date="2008" name="BMC Genomics">
        <title>The genome sequence of the fish pathogen Aliivibrio salmonicida strain LFI1238 shows extensive evidence of gene decay.</title>
        <authorList>
            <person name="Hjerde E."/>
            <person name="Lorentzen M.S."/>
            <person name="Holden M.T."/>
            <person name="Seeger K."/>
            <person name="Paulsen S."/>
            <person name="Bason N."/>
            <person name="Churcher C."/>
            <person name="Harris D."/>
            <person name="Norbertczak H."/>
            <person name="Quail M.A."/>
            <person name="Sanders S."/>
            <person name="Thurston S."/>
            <person name="Parkhill J."/>
            <person name="Willassen N.P."/>
            <person name="Thomson N.R."/>
        </authorList>
    </citation>
    <scope>NUCLEOTIDE SEQUENCE [LARGE SCALE GENOMIC DNA]</scope>
    <source>
        <strain>LFI1238</strain>
    </source>
</reference>
<name>RL19_ALISL</name>
<dbReference type="EMBL" id="FM178379">
    <property type="protein sequence ID" value="CAQ78337.1"/>
    <property type="molecule type" value="Genomic_DNA"/>
</dbReference>
<dbReference type="RefSeq" id="WP_012549459.1">
    <property type="nucleotide sequence ID" value="NC_011312.1"/>
</dbReference>
<dbReference type="SMR" id="B6EGC2"/>
<dbReference type="KEGG" id="vsa:VSAL_I0652"/>
<dbReference type="eggNOG" id="COG0335">
    <property type="taxonomic scope" value="Bacteria"/>
</dbReference>
<dbReference type="HOGENOM" id="CLU_103507_2_1_6"/>
<dbReference type="Proteomes" id="UP000001730">
    <property type="component" value="Chromosome 1"/>
</dbReference>
<dbReference type="GO" id="GO:0022625">
    <property type="term" value="C:cytosolic large ribosomal subunit"/>
    <property type="evidence" value="ECO:0007669"/>
    <property type="project" value="TreeGrafter"/>
</dbReference>
<dbReference type="GO" id="GO:0003735">
    <property type="term" value="F:structural constituent of ribosome"/>
    <property type="evidence" value="ECO:0007669"/>
    <property type="project" value="InterPro"/>
</dbReference>
<dbReference type="GO" id="GO:0006412">
    <property type="term" value="P:translation"/>
    <property type="evidence" value="ECO:0007669"/>
    <property type="project" value="UniProtKB-UniRule"/>
</dbReference>
<dbReference type="FunFam" id="2.30.30.790:FF:000001">
    <property type="entry name" value="50S ribosomal protein L19"/>
    <property type="match status" value="1"/>
</dbReference>
<dbReference type="Gene3D" id="2.30.30.790">
    <property type="match status" value="1"/>
</dbReference>
<dbReference type="HAMAP" id="MF_00402">
    <property type="entry name" value="Ribosomal_bL19"/>
    <property type="match status" value="1"/>
</dbReference>
<dbReference type="InterPro" id="IPR001857">
    <property type="entry name" value="Ribosomal_bL19"/>
</dbReference>
<dbReference type="InterPro" id="IPR018257">
    <property type="entry name" value="Ribosomal_bL19_CS"/>
</dbReference>
<dbReference type="InterPro" id="IPR038657">
    <property type="entry name" value="Ribosomal_bL19_sf"/>
</dbReference>
<dbReference type="InterPro" id="IPR008991">
    <property type="entry name" value="Translation_prot_SH3-like_sf"/>
</dbReference>
<dbReference type="NCBIfam" id="TIGR01024">
    <property type="entry name" value="rplS_bact"/>
    <property type="match status" value="1"/>
</dbReference>
<dbReference type="PANTHER" id="PTHR15680:SF9">
    <property type="entry name" value="LARGE RIBOSOMAL SUBUNIT PROTEIN BL19M"/>
    <property type="match status" value="1"/>
</dbReference>
<dbReference type="PANTHER" id="PTHR15680">
    <property type="entry name" value="RIBOSOMAL PROTEIN L19"/>
    <property type="match status" value="1"/>
</dbReference>
<dbReference type="Pfam" id="PF01245">
    <property type="entry name" value="Ribosomal_L19"/>
    <property type="match status" value="1"/>
</dbReference>
<dbReference type="PIRSF" id="PIRSF002191">
    <property type="entry name" value="Ribosomal_L19"/>
    <property type="match status" value="1"/>
</dbReference>
<dbReference type="PRINTS" id="PR00061">
    <property type="entry name" value="RIBOSOMALL19"/>
</dbReference>
<dbReference type="SUPFAM" id="SSF50104">
    <property type="entry name" value="Translation proteins SH3-like domain"/>
    <property type="match status" value="1"/>
</dbReference>
<dbReference type="PROSITE" id="PS01015">
    <property type="entry name" value="RIBOSOMAL_L19"/>
    <property type="match status" value="1"/>
</dbReference>
<proteinExistence type="inferred from homology"/>
<gene>
    <name evidence="1" type="primary">rplS</name>
    <name type="ordered locus">VSAL_I0652</name>
</gene>